<feature type="chain" id="PRO_0000277611" description="Inactive ADP-ribosyltransferase arh2">
    <location>
        <begin position="1"/>
        <end position="354"/>
    </location>
</feature>
<keyword id="KW-0963">Cytoplasm</keyword>
<keyword id="KW-1185">Reference proteome</keyword>
<evidence type="ECO:0000250" key="1">
    <source>
        <dbReference type="UniProtKB" id="Q8BGK2"/>
    </source>
</evidence>
<evidence type="ECO:0000269" key="2">
    <source>
    </source>
</evidence>
<evidence type="ECO:0000305" key="3"/>
<evidence type="ECO:0000305" key="4">
    <source>
    </source>
</evidence>
<gene>
    <name type="primary">adprhl1</name>
    <name type="synonym">arh2</name>
</gene>
<proteinExistence type="evidence at protein level"/>
<sequence length="354" mass="40205">MEKFKAAMLLAGTGDALGYKNFSWVFCASGVKIQEELKQLGGLENLVLSIDGWPVSNNTLMHIATAESLVSDYWSIEDLYRDMVKRYIDVVDKLQGRRPDPATIEGCAHLKPDNYLLAWHTPFNEKGSGFGAATKAMCIGMRYWKPGRLETLIEVSIESGRMTHNHPTGFLGSLCTALFTSYAIQEKPLAQWGREMLKLLPMAEEYCKKTIRHMAEYQEHWFYFEAKWQFYLEEREIAEENENKPKFPDKYDAEERDKAYKTWSSEGRGGRRGHDAPMIAYDALLGAGGDWKELCNRAMFHGGEGGATGSIAGCLYGLLYGISKVPKSLYQQLEMKERLENLGEKLYHLATMEK</sequence>
<accession>Q6AZR2</accession>
<dbReference type="EMBL" id="BC077455">
    <property type="protein sequence ID" value="AAH77455.1"/>
    <property type="molecule type" value="mRNA"/>
</dbReference>
<dbReference type="RefSeq" id="NP_001086791.1">
    <property type="nucleotide sequence ID" value="NM_001093322.1"/>
</dbReference>
<dbReference type="SMR" id="Q6AZR2"/>
<dbReference type="DNASU" id="446626"/>
<dbReference type="GeneID" id="446626"/>
<dbReference type="KEGG" id="xla:446626"/>
<dbReference type="AGR" id="Xenbase:XB-GENE-989263"/>
<dbReference type="CTD" id="446626"/>
<dbReference type="Xenbase" id="XB-GENE-989263">
    <property type="gene designation" value="adprhl1.S"/>
</dbReference>
<dbReference type="OrthoDB" id="10250509at2759"/>
<dbReference type="BRENDA" id="3.2.2.19">
    <property type="organism ID" value="6725"/>
</dbReference>
<dbReference type="Proteomes" id="UP000186698">
    <property type="component" value="Chromosome 2S"/>
</dbReference>
<dbReference type="Bgee" id="446626">
    <property type="expression patterns" value="Expressed in heart and 4 other cell types or tissues"/>
</dbReference>
<dbReference type="GO" id="GO:0030017">
    <property type="term" value="C:sarcomere"/>
    <property type="evidence" value="ECO:0000315"/>
    <property type="project" value="UniProtKB"/>
</dbReference>
<dbReference type="GO" id="GO:0003875">
    <property type="term" value="F:ADP-ribosylarginine hydrolase activity"/>
    <property type="evidence" value="ECO:0007669"/>
    <property type="project" value="InterPro"/>
</dbReference>
<dbReference type="GO" id="GO:0000287">
    <property type="term" value="F:magnesium ion binding"/>
    <property type="evidence" value="ECO:0007669"/>
    <property type="project" value="InterPro"/>
</dbReference>
<dbReference type="GO" id="GO:0003242">
    <property type="term" value="P:cardiac chamber ballooning"/>
    <property type="evidence" value="ECO:0000315"/>
    <property type="project" value="UniProtKB"/>
</dbReference>
<dbReference type="GO" id="GO:0055003">
    <property type="term" value="P:cardiac myofibril assembly"/>
    <property type="evidence" value="ECO:0000315"/>
    <property type="project" value="UniProtKB"/>
</dbReference>
<dbReference type="GO" id="GO:0051725">
    <property type="term" value="P:protein de-ADP-ribosylation"/>
    <property type="evidence" value="ECO:0007669"/>
    <property type="project" value="InterPro"/>
</dbReference>
<dbReference type="FunFam" id="1.10.4080.10:FF:000002">
    <property type="entry name" value="ADP-ribosylarginine hydrolase isoform X1"/>
    <property type="match status" value="1"/>
</dbReference>
<dbReference type="Gene3D" id="1.10.4080.10">
    <property type="entry name" value="ADP-ribosylation/Crystallin J1"/>
    <property type="match status" value="1"/>
</dbReference>
<dbReference type="InterPro" id="IPR012108">
    <property type="entry name" value="ADP-ribosylarg_hydro"/>
</dbReference>
<dbReference type="InterPro" id="IPR050792">
    <property type="entry name" value="ADP-ribosylglycohydrolase"/>
</dbReference>
<dbReference type="InterPro" id="IPR005502">
    <property type="entry name" value="Ribosyl_crysJ1"/>
</dbReference>
<dbReference type="InterPro" id="IPR036705">
    <property type="entry name" value="Ribosyl_crysJ1_sf"/>
</dbReference>
<dbReference type="PANTHER" id="PTHR16222">
    <property type="entry name" value="ADP-RIBOSYLGLYCOHYDROLASE"/>
    <property type="match status" value="1"/>
</dbReference>
<dbReference type="PANTHER" id="PTHR16222:SF23">
    <property type="entry name" value="INACTIVE ADP-RIBOSYLTRANSFERASE ARH2"/>
    <property type="match status" value="1"/>
</dbReference>
<dbReference type="Pfam" id="PF03747">
    <property type="entry name" value="ADP_ribosyl_GH"/>
    <property type="match status" value="1"/>
</dbReference>
<dbReference type="PIRSF" id="PIRSF016939">
    <property type="entry name" value="ADP_ribslarg_hdr"/>
    <property type="match status" value="1"/>
</dbReference>
<dbReference type="SUPFAM" id="SSF101478">
    <property type="entry name" value="ADP-ribosylglycohydrolase"/>
    <property type="match status" value="1"/>
</dbReference>
<name>ARHL1_XENLA</name>
<comment type="function">
    <text evidence="1 2">Required for myofibril assembly and outgrowth of the cardiac chambers in the developing heart (PubMed:27217161). Appears to be catalytically inactive, showing no activity against O-acetyl-ADP-ribose (By similarity).</text>
</comment>
<comment type="subcellular location">
    <subcellularLocation>
        <location evidence="2">Cytoplasm</location>
        <location evidence="2">Myofibril</location>
        <location evidence="2">Sarcomere</location>
    </subcellularLocation>
</comment>
<comment type="tissue specificity">
    <text evidence="2">Expressed in heart (at protein level) (PubMed:27217161). A short form is detected in both heart and tadpole tail (at protein level) (PubMed:27217161).</text>
</comment>
<comment type="developmental stage">
    <text evidence="2">Expressed in embryos, juveniles and adults. Onset of embryonic expression coincides with early myocardial differentiation (PubMed:27217161). Expression is detected in cardiac tissue from stage 29 with the greatest concentration found in regions of actively growing chamber myocardium (PubMed:27217161). At stage 40, highly expressed in the left and right lateral sides marking the growing atrial chambers with lower levels in the dorsal atrial roof (PubMed:27217161).</text>
</comment>
<comment type="disruption phenotype">
    <text evidence="2">Morpholino knockdown results in defective embryonic cardiogenesis with hearts forming small ventricles that do not beat (PubMed:27217161). Defective endocardial maturation with endocardial cells showing a rounded morphology and no clear lumen forming in the heart (PubMed:27217161). Myofibril assembly is disrupted in the developing ventricle, preventing ventricle outgrowth (PubMed:27217161).</text>
</comment>
<comment type="similarity">
    <text evidence="3">Belongs to the ADP-ribosylglycohydrolase family.</text>
</comment>
<comment type="caution">
    <text evidence="4">Although it belongs to the ADP-ribosylglycohydrolase family, lacks metal-binding and substrate-binding residues, suggesting that it has no hydrolase activity.</text>
</comment>
<reference key="1">
    <citation type="submission" date="2004-07" db="EMBL/GenBank/DDBJ databases">
        <authorList>
            <consortium name="NIH - Xenopus Gene Collection (XGC) project"/>
        </authorList>
    </citation>
    <scope>NUCLEOTIDE SEQUENCE [LARGE SCALE MRNA]</scope>
    <source>
        <tissue>Heart</tissue>
    </source>
</reference>
<reference key="2">
    <citation type="journal article" date="2016" name="Dev. Biol.">
        <title>The cardiac-restricted protein ADP-ribosylhydrolase-like 1 is essential for heart chamber outgrowth and acts on muscle actin filament assembly.</title>
        <authorList>
            <person name="Smith S.J."/>
            <person name="Towers N."/>
            <person name="Saldanha J.W."/>
            <person name="Shang C.A."/>
            <person name="Mahmood S.R."/>
            <person name="Taylor W.R."/>
            <person name="Mohun T.J."/>
        </authorList>
    </citation>
    <scope>FUNCTION</scope>
    <scope>SUBCELLULAR LOCATION</scope>
    <scope>TISSUE SPECIFICITY</scope>
    <scope>DEVELOPMENTAL STAGE</scope>
    <scope>DISRUPTION PHENOTYPE</scope>
    <scope>3D-STRUCTURE MODELING</scope>
</reference>
<organism>
    <name type="scientific">Xenopus laevis</name>
    <name type="common">African clawed frog</name>
    <dbReference type="NCBI Taxonomy" id="8355"/>
    <lineage>
        <taxon>Eukaryota</taxon>
        <taxon>Metazoa</taxon>
        <taxon>Chordata</taxon>
        <taxon>Craniata</taxon>
        <taxon>Vertebrata</taxon>
        <taxon>Euteleostomi</taxon>
        <taxon>Amphibia</taxon>
        <taxon>Batrachia</taxon>
        <taxon>Anura</taxon>
        <taxon>Pipoidea</taxon>
        <taxon>Pipidae</taxon>
        <taxon>Xenopodinae</taxon>
        <taxon>Xenopus</taxon>
        <taxon>Xenopus</taxon>
    </lineage>
</organism>
<protein>
    <recommendedName>
        <fullName evidence="3">Inactive ADP-ribosyltransferase arh2</fullName>
    </recommendedName>
    <alternativeName>
        <fullName evidence="3">ADP-ribosylhydrolase-like protein 1</fullName>
    </alternativeName>
    <alternativeName>
        <fullName>[Protein ADP-ribosylarginine] hydrolase-like protein 1</fullName>
    </alternativeName>
</protein>